<dbReference type="EMBL" id="AC000104">
    <property type="status" value="NOT_ANNOTATED_CDS"/>
    <property type="molecule type" value="Genomic_DNA"/>
</dbReference>
<dbReference type="EMBL" id="AC002332">
    <property type="protein sequence ID" value="AAB80655.1"/>
    <property type="molecule type" value="Genomic_DNA"/>
</dbReference>
<dbReference type="EMBL" id="AC022287">
    <property type="protein sequence ID" value="AAF63771.1"/>
    <property type="molecule type" value="Genomic_DNA"/>
</dbReference>
<dbReference type="EMBL" id="CP002684">
    <property type="protein sequence ID" value="AEE27702.1"/>
    <property type="molecule type" value="Genomic_DNA"/>
</dbReference>
<dbReference type="EMBL" id="CP002685">
    <property type="protein sequence ID" value="AEC08824.1"/>
    <property type="molecule type" value="Genomic_DNA"/>
</dbReference>
<dbReference type="EMBL" id="CP002686">
    <property type="protein sequence ID" value="AEE74076.1"/>
    <property type="molecule type" value="Genomic_DNA"/>
</dbReference>
<dbReference type="EMBL" id="AY042843">
    <property type="protein sequence ID" value="AAK68783.1"/>
    <property type="molecule type" value="mRNA"/>
</dbReference>
<dbReference type="EMBL" id="AY054508">
    <property type="protein sequence ID" value="AAK96699.1"/>
    <property type="molecule type" value="mRNA"/>
</dbReference>
<dbReference type="EMBL" id="AY072481">
    <property type="protein sequence ID" value="AAL66896.1"/>
    <property type="molecule type" value="mRNA"/>
</dbReference>
<dbReference type="EMBL" id="AY081677">
    <property type="protein sequence ID" value="AAM10239.1"/>
    <property type="molecule type" value="mRNA"/>
</dbReference>
<dbReference type="EMBL" id="AY086853">
    <property type="protein sequence ID" value="AAM63901.1"/>
    <property type="molecule type" value="mRNA"/>
</dbReference>
<dbReference type="EMBL" id="AY088227">
    <property type="protein sequence ID" value="AAM65768.1"/>
    <property type="molecule type" value="mRNA"/>
</dbReference>
<dbReference type="EMBL" id="AY088893">
    <property type="protein sequence ID" value="AAM67199.1"/>
    <property type="molecule type" value="mRNA"/>
</dbReference>
<dbReference type="EMBL" id="Z18477">
    <property type="protein sequence ID" value="CAA79199.1"/>
    <property type="molecule type" value="mRNA"/>
</dbReference>
<dbReference type="EMBL" id="Z18371">
    <property type="protein sequence ID" value="CAA79169.1"/>
    <property type="molecule type" value="mRNA"/>
</dbReference>
<dbReference type="PIR" id="F84744">
    <property type="entry name" value="F84744"/>
</dbReference>
<dbReference type="RefSeq" id="NP_180895.1">
    <molecule id="P49690-1"/>
    <property type="nucleotide sequence ID" value="NM_128897.4"/>
</dbReference>
<dbReference type="RefSeq" id="NP_187090.1">
    <molecule id="P49690-1"/>
    <property type="nucleotide sequence ID" value="NM_111311.5"/>
</dbReference>
<dbReference type="RefSeq" id="NP_563707.1">
    <molecule id="P49690-1"/>
    <property type="nucleotide sequence ID" value="NM_100327.5"/>
</dbReference>
<dbReference type="SMR" id="P49690"/>
<dbReference type="BioGRID" id="24746">
    <property type="interactions" value="56"/>
</dbReference>
<dbReference type="BioGRID" id="3247">
    <property type="interactions" value="53"/>
</dbReference>
<dbReference type="BioGRID" id="4930">
    <property type="interactions" value="53"/>
</dbReference>
<dbReference type="FunCoup" id="P49690">
    <property type="interactions" value="3766"/>
</dbReference>
<dbReference type="STRING" id="3702.P49690"/>
<dbReference type="iPTMnet" id="P49690"/>
<dbReference type="PaxDb" id="3702-AT1G04480.1"/>
<dbReference type="EnsemblPlants" id="AT1G04480.1">
    <molecule id="P49690-1"/>
    <property type="protein sequence ID" value="AT1G04480.1"/>
    <property type="gene ID" value="AT1G04480"/>
</dbReference>
<dbReference type="EnsemblPlants" id="AT2G33370.1">
    <molecule id="P49690-1"/>
    <property type="protein sequence ID" value="AT2G33370.1"/>
    <property type="gene ID" value="AT2G33370"/>
</dbReference>
<dbReference type="EnsemblPlants" id="AT3G04400.1">
    <molecule id="P49690-1"/>
    <property type="protein sequence ID" value="AT3G04400.1"/>
    <property type="gene ID" value="AT3G04400"/>
</dbReference>
<dbReference type="GeneID" id="817900"/>
<dbReference type="GeneID" id="819595"/>
<dbReference type="GeneID" id="839511"/>
<dbReference type="Gramene" id="AT1G04480.1">
    <molecule id="P49690-1"/>
    <property type="protein sequence ID" value="AT1G04480.1"/>
    <property type="gene ID" value="AT1G04480"/>
</dbReference>
<dbReference type="Gramene" id="AT2G33370.1">
    <molecule id="P49690-1"/>
    <property type="protein sequence ID" value="AT2G33370.1"/>
    <property type="gene ID" value="AT2G33370"/>
</dbReference>
<dbReference type="Gramene" id="AT3G04400.1">
    <molecule id="P49690-1"/>
    <property type="protein sequence ID" value="AT3G04400.1"/>
    <property type="gene ID" value="AT3G04400"/>
</dbReference>
<dbReference type="KEGG" id="ath:AT1G04480"/>
<dbReference type="KEGG" id="ath:AT2G33370"/>
<dbReference type="KEGG" id="ath:AT3G04400"/>
<dbReference type="Araport" id="AT1G04480"/>
<dbReference type="Araport" id="AT2G33370"/>
<dbReference type="Araport" id="AT3G04400"/>
<dbReference type="TAIR" id="AT1G04480"/>
<dbReference type="TAIR" id="AT2G33370"/>
<dbReference type="TAIR" id="AT3G04400">
    <property type="gene designation" value="EMB2171"/>
</dbReference>
<dbReference type="eggNOG" id="KOG0901">
    <property type="taxonomic scope" value="Eukaryota"/>
</dbReference>
<dbReference type="HOGENOM" id="CLU_095071_3_0_1"/>
<dbReference type="InParanoid" id="P49690"/>
<dbReference type="OMA" id="IRQSKPW"/>
<dbReference type="OrthoDB" id="1029683at2759"/>
<dbReference type="PhylomeDB" id="P49690"/>
<dbReference type="CD-CODE" id="4299E36E">
    <property type="entry name" value="Nucleolus"/>
</dbReference>
<dbReference type="PRO" id="PR:P49690"/>
<dbReference type="Proteomes" id="UP000006548">
    <property type="component" value="Chromosome 1"/>
</dbReference>
<dbReference type="Proteomes" id="UP000006548">
    <property type="component" value="Chromosome 2"/>
</dbReference>
<dbReference type="Proteomes" id="UP000006548">
    <property type="component" value="Chromosome 3"/>
</dbReference>
<dbReference type="ExpressionAtlas" id="P49690">
    <property type="expression patterns" value="baseline and differential"/>
</dbReference>
<dbReference type="GO" id="GO:0005829">
    <property type="term" value="C:cytosol"/>
    <property type="evidence" value="ECO:0007005"/>
    <property type="project" value="TAIR"/>
</dbReference>
<dbReference type="GO" id="GO:0022625">
    <property type="term" value="C:cytosolic large ribosomal subunit"/>
    <property type="evidence" value="ECO:0007005"/>
    <property type="project" value="TAIR"/>
</dbReference>
<dbReference type="GO" id="GO:0005783">
    <property type="term" value="C:endoplasmic reticulum"/>
    <property type="evidence" value="ECO:0007005"/>
    <property type="project" value="TAIR"/>
</dbReference>
<dbReference type="GO" id="GO:0005576">
    <property type="term" value="C:extracellular region"/>
    <property type="evidence" value="ECO:0007005"/>
    <property type="project" value="TAIR"/>
</dbReference>
<dbReference type="GO" id="GO:0005730">
    <property type="term" value="C:nucleolus"/>
    <property type="evidence" value="ECO:0007005"/>
    <property type="project" value="TAIR"/>
</dbReference>
<dbReference type="GO" id="GO:0003729">
    <property type="term" value="F:mRNA binding"/>
    <property type="evidence" value="ECO:0000314"/>
    <property type="project" value="TAIR"/>
</dbReference>
<dbReference type="GO" id="GO:0003735">
    <property type="term" value="F:structural constituent of ribosome"/>
    <property type="evidence" value="ECO:0000314"/>
    <property type="project" value="CAFA"/>
</dbReference>
<dbReference type="GO" id="GO:0006412">
    <property type="term" value="P:translation"/>
    <property type="evidence" value="ECO:0007669"/>
    <property type="project" value="InterPro"/>
</dbReference>
<dbReference type="CDD" id="cd00337">
    <property type="entry name" value="Ribosomal_uL14"/>
    <property type="match status" value="1"/>
</dbReference>
<dbReference type="FunFam" id="2.40.150.20:FF:000003">
    <property type="entry name" value="60S ribosomal protein L23"/>
    <property type="match status" value="1"/>
</dbReference>
<dbReference type="Gene3D" id="2.40.150.20">
    <property type="entry name" value="Ribosomal protein L14"/>
    <property type="match status" value="1"/>
</dbReference>
<dbReference type="HAMAP" id="MF_01367">
    <property type="entry name" value="Ribosomal_uL14"/>
    <property type="match status" value="1"/>
</dbReference>
<dbReference type="InterPro" id="IPR000218">
    <property type="entry name" value="Ribosomal_uL14"/>
</dbReference>
<dbReference type="InterPro" id="IPR019972">
    <property type="entry name" value="Ribosomal_uL14_CS"/>
</dbReference>
<dbReference type="InterPro" id="IPR036853">
    <property type="entry name" value="Ribosomal_uL14_sf"/>
</dbReference>
<dbReference type="NCBIfam" id="NF006344">
    <property type="entry name" value="PRK08571.1"/>
    <property type="match status" value="1"/>
</dbReference>
<dbReference type="PANTHER" id="PTHR11761">
    <property type="entry name" value="50S/60S RIBOSOMAL PROTEIN L14/L23"/>
    <property type="match status" value="1"/>
</dbReference>
<dbReference type="PANTHER" id="PTHR11761:SF8">
    <property type="entry name" value="LARGE RIBOSOMAL SUBUNIT PROTEIN UL14"/>
    <property type="match status" value="1"/>
</dbReference>
<dbReference type="Pfam" id="PF00238">
    <property type="entry name" value="Ribosomal_L14"/>
    <property type="match status" value="1"/>
</dbReference>
<dbReference type="SMART" id="SM01374">
    <property type="entry name" value="Ribosomal_L14"/>
    <property type="match status" value="1"/>
</dbReference>
<dbReference type="SUPFAM" id="SSF50193">
    <property type="entry name" value="Ribosomal protein L14"/>
    <property type="match status" value="1"/>
</dbReference>
<dbReference type="PROSITE" id="PS00049">
    <property type="entry name" value="RIBOSOMAL_L14"/>
    <property type="match status" value="1"/>
</dbReference>
<evidence type="ECO:0000303" key="1">
    <source>
    </source>
</evidence>
<evidence type="ECO:0000305" key="2"/>
<sequence length="140" mass="15027">MSKRGRGGTSGNKFRMSLGLPVAATVNCADNTGAKNLYIISVKGIKGRLNRLPSACVGDMVMATVKKGKPDLRKKVLPAVIVRQRKPWRRKDGVFMYFEDNAGVIVNPKGEMKGSAITGPIGKECADLWPRIASAANAIV</sequence>
<keyword id="KW-0025">Alternative splicing</keyword>
<keyword id="KW-1185">Reference proteome</keyword>
<keyword id="KW-0687">Ribonucleoprotein</keyword>
<keyword id="KW-0689">Ribosomal protein</keyword>
<proteinExistence type="evidence at transcript level"/>
<comment type="alternative products">
    <event type="alternative splicing"/>
    <isoform>
        <id>P49690-1</id>
        <name>1</name>
        <sequence type="displayed"/>
    </isoform>
    <text>A number of isoforms are produced. According to EST sequences.</text>
</comment>
<comment type="similarity">
    <text evidence="2">Belongs to the universal ribosomal protein uL14 family.</text>
</comment>
<reference key="1">
    <citation type="journal article" date="2000" name="Nature">
        <title>Sequence and analysis of chromosome 1 of the plant Arabidopsis thaliana.</title>
        <authorList>
            <person name="Theologis A."/>
            <person name="Ecker J.R."/>
            <person name="Palm C.J."/>
            <person name="Federspiel N.A."/>
            <person name="Kaul S."/>
            <person name="White O."/>
            <person name="Alonso J."/>
            <person name="Altafi H."/>
            <person name="Araujo R."/>
            <person name="Bowman C.L."/>
            <person name="Brooks S.Y."/>
            <person name="Buehler E."/>
            <person name="Chan A."/>
            <person name="Chao Q."/>
            <person name="Chen H."/>
            <person name="Cheuk R.F."/>
            <person name="Chin C.W."/>
            <person name="Chung M.K."/>
            <person name="Conn L."/>
            <person name="Conway A.B."/>
            <person name="Conway A.R."/>
            <person name="Creasy T.H."/>
            <person name="Dewar K."/>
            <person name="Dunn P."/>
            <person name="Etgu P."/>
            <person name="Feldblyum T.V."/>
            <person name="Feng J.-D."/>
            <person name="Fong B."/>
            <person name="Fujii C.Y."/>
            <person name="Gill J.E."/>
            <person name="Goldsmith A.D."/>
            <person name="Haas B."/>
            <person name="Hansen N.F."/>
            <person name="Hughes B."/>
            <person name="Huizar L."/>
            <person name="Hunter J.L."/>
            <person name="Jenkins J."/>
            <person name="Johnson-Hopson C."/>
            <person name="Khan S."/>
            <person name="Khaykin E."/>
            <person name="Kim C.J."/>
            <person name="Koo H.L."/>
            <person name="Kremenetskaia I."/>
            <person name="Kurtz D.B."/>
            <person name="Kwan A."/>
            <person name="Lam B."/>
            <person name="Langin-Hooper S."/>
            <person name="Lee A."/>
            <person name="Lee J.M."/>
            <person name="Lenz C.A."/>
            <person name="Li J.H."/>
            <person name="Li Y.-P."/>
            <person name="Lin X."/>
            <person name="Liu S.X."/>
            <person name="Liu Z.A."/>
            <person name="Luros J.S."/>
            <person name="Maiti R."/>
            <person name="Marziali A."/>
            <person name="Militscher J."/>
            <person name="Miranda M."/>
            <person name="Nguyen M."/>
            <person name="Nierman W.C."/>
            <person name="Osborne B.I."/>
            <person name="Pai G."/>
            <person name="Peterson J."/>
            <person name="Pham P.K."/>
            <person name="Rizzo M."/>
            <person name="Rooney T."/>
            <person name="Rowley D."/>
            <person name="Sakano H."/>
            <person name="Salzberg S.L."/>
            <person name="Schwartz J.R."/>
            <person name="Shinn P."/>
            <person name="Southwick A.M."/>
            <person name="Sun H."/>
            <person name="Tallon L.J."/>
            <person name="Tambunga G."/>
            <person name="Toriumi M.J."/>
            <person name="Town C.D."/>
            <person name="Utterback T."/>
            <person name="Van Aken S."/>
            <person name="Vaysberg M."/>
            <person name="Vysotskaia V.S."/>
            <person name="Walker M."/>
            <person name="Wu D."/>
            <person name="Yu G."/>
            <person name="Fraser C.M."/>
            <person name="Venter J.C."/>
            <person name="Davis R.W."/>
        </authorList>
    </citation>
    <scope>NUCLEOTIDE SEQUENCE [LARGE SCALE GENOMIC DNA] (RPL23A)</scope>
    <source>
        <strain>cv. Columbia</strain>
    </source>
</reference>
<reference key="2">
    <citation type="journal article" date="1999" name="Nature">
        <title>Sequence and analysis of chromosome 2 of the plant Arabidopsis thaliana.</title>
        <authorList>
            <person name="Lin X."/>
            <person name="Kaul S."/>
            <person name="Rounsley S.D."/>
            <person name="Shea T.P."/>
            <person name="Benito M.-I."/>
            <person name="Town C.D."/>
            <person name="Fujii C.Y."/>
            <person name="Mason T.M."/>
            <person name="Bowman C.L."/>
            <person name="Barnstead M.E."/>
            <person name="Feldblyum T.V."/>
            <person name="Buell C.R."/>
            <person name="Ketchum K.A."/>
            <person name="Lee J.J."/>
            <person name="Ronning C.M."/>
            <person name="Koo H.L."/>
            <person name="Moffat K.S."/>
            <person name="Cronin L.A."/>
            <person name="Shen M."/>
            <person name="Pai G."/>
            <person name="Van Aken S."/>
            <person name="Umayam L."/>
            <person name="Tallon L.J."/>
            <person name="Gill J.E."/>
            <person name="Adams M.D."/>
            <person name="Carrera A.J."/>
            <person name="Creasy T.H."/>
            <person name="Goodman H.M."/>
            <person name="Somerville C.R."/>
            <person name="Copenhaver G.P."/>
            <person name="Preuss D."/>
            <person name="Nierman W.C."/>
            <person name="White O."/>
            <person name="Eisen J.A."/>
            <person name="Salzberg S.L."/>
            <person name="Fraser C.M."/>
            <person name="Venter J.C."/>
        </authorList>
    </citation>
    <scope>NUCLEOTIDE SEQUENCE [LARGE SCALE GENOMIC DNA] (RPL23B)</scope>
    <source>
        <strain>cv. Columbia</strain>
    </source>
</reference>
<reference key="3">
    <citation type="journal article" date="2000" name="Nature">
        <title>Sequence and analysis of chromosome 3 of the plant Arabidopsis thaliana.</title>
        <authorList>
            <person name="Salanoubat M."/>
            <person name="Lemcke K."/>
            <person name="Rieger M."/>
            <person name="Ansorge W."/>
            <person name="Unseld M."/>
            <person name="Fartmann B."/>
            <person name="Valle G."/>
            <person name="Bloecker H."/>
            <person name="Perez-Alonso M."/>
            <person name="Obermaier B."/>
            <person name="Delseny M."/>
            <person name="Boutry M."/>
            <person name="Grivell L.A."/>
            <person name="Mache R."/>
            <person name="Puigdomenech P."/>
            <person name="De Simone V."/>
            <person name="Choisne N."/>
            <person name="Artiguenave F."/>
            <person name="Robert C."/>
            <person name="Brottier P."/>
            <person name="Wincker P."/>
            <person name="Cattolico L."/>
            <person name="Weissenbach J."/>
            <person name="Saurin W."/>
            <person name="Quetier F."/>
            <person name="Schaefer M."/>
            <person name="Mueller-Auer S."/>
            <person name="Gabel C."/>
            <person name="Fuchs M."/>
            <person name="Benes V."/>
            <person name="Wurmbach E."/>
            <person name="Drzonek H."/>
            <person name="Erfle H."/>
            <person name="Jordan N."/>
            <person name="Bangert S."/>
            <person name="Wiedelmann R."/>
            <person name="Kranz H."/>
            <person name="Voss H."/>
            <person name="Holland R."/>
            <person name="Brandt P."/>
            <person name="Nyakatura G."/>
            <person name="Vezzi A."/>
            <person name="D'Angelo M."/>
            <person name="Pallavicini A."/>
            <person name="Toppo S."/>
            <person name="Simionati B."/>
            <person name="Conrad A."/>
            <person name="Hornischer K."/>
            <person name="Kauer G."/>
            <person name="Loehnert T.-H."/>
            <person name="Nordsiek G."/>
            <person name="Reichelt J."/>
            <person name="Scharfe M."/>
            <person name="Schoen O."/>
            <person name="Bargues M."/>
            <person name="Terol J."/>
            <person name="Climent J."/>
            <person name="Navarro P."/>
            <person name="Collado C."/>
            <person name="Perez-Perez A."/>
            <person name="Ottenwaelder B."/>
            <person name="Duchemin D."/>
            <person name="Cooke R."/>
            <person name="Laudie M."/>
            <person name="Berger-Llauro C."/>
            <person name="Purnelle B."/>
            <person name="Masuy D."/>
            <person name="de Haan M."/>
            <person name="Maarse A.C."/>
            <person name="Alcaraz J.-P."/>
            <person name="Cottet A."/>
            <person name="Casacuberta E."/>
            <person name="Monfort A."/>
            <person name="Argiriou A."/>
            <person name="Flores M."/>
            <person name="Liguori R."/>
            <person name="Vitale D."/>
            <person name="Mannhaupt G."/>
            <person name="Haase D."/>
            <person name="Schoof H."/>
            <person name="Rudd S."/>
            <person name="Zaccaria P."/>
            <person name="Mewes H.-W."/>
            <person name="Mayer K.F.X."/>
            <person name="Kaul S."/>
            <person name="Town C.D."/>
            <person name="Koo H.L."/>
            <person name="Tallon L.J."/>
            <person name="Jenkins J."/>
            <person name="Rooney T."/>
            <person name="Rizzo M."/>
            <person name="Walts A."/>
            <person name="Utterback T."/>
            <person name="Fujii C.Y."/>
            <person name="Shea T.P."/>
            <person name="Creasy T.H."/>
            <person name="Haas B."/>
            <person name="Maiti R."/>
            <person name="Wu D."/>
            <person name="Peterson J."/>
            <person name="Van Aken S."/>
            <person name="Pai G."/>
            <person name="Militscher J."/>
            <person name="Sellers P."/>
            <person name="Gill J.E."/>
            <person name="Feldblyum T.V."/>
            <person name="Preuss D."/>
            <person name="Lin X."/>
            <person name="Nierman W.C."/>
            <person name="Salzberg S.L."/>
            <person name="White O."/>
            <person name="Venter J.C."/>
            <person name="Fraser C.M."/>
            <person name="Kaneko T."/>
            <person name="Nakamura Y."/>
            <person name="Sato S."/>
            <person name="Kato T."/>
            <person name="Asamizu E."/>
            <person name="Sasamoto S."/>
            <person name="Kimura T."/>
            <person name="Idesawa K."/>
            <person name="Kawashima K."/>
            <person name="Kishida Y."/>
            <person name="Kiyokawa C."/>
            <person name="Kohara M."/>
            <person name="Matsumoto M."/>
            <person name="Matsuno A."/>
            <person name="Muraki A."/>
            <person name="Nakayama S."/>
            <person name="Nakazaki N."/>
            <person name="Shinpo S."/>
            <person name="Takeuchi C."/>
            <person name="Wada T."/>
            <person name="Watanabe A."/>
            <person name="Yamada M."/>
            <person name="Yasuda M."/>
            <person name="Tabata S."/>
        </authorList>
    </citation>
    <scope>NUCLEOTIDE SEQUENCE [LARGE SCALE GENOMIC DNA] (RPL23C)</scope>
    <source>
        <strain>cv. Columbia</strain>
    </source>
</reference>
<reference key="4">
    <citation type="journal article" date="2017" name="Plant J.">
        <title>Araport11: a complete reannotation of the Arabidopsis thaliana reference genome.</title>
        <authorList>
            <person name="Cheng C.Y."/>
            <person name="Krishnakumar V."/>
            <person name="Chan A.P."/>
            <person name="Thibaud-Nissen F."/>
            <person name="Schobel S."/>
            <person name="Town C.D."/>
        </authorList>
    </citation>
    <scope>GENOME REANNOTATION</scope>
    <source>
        <strain>cv. Columbia</strain>
    </source>
</reference>
<reference key="5">
    <citation type="journal article" date="2003" name="Science">
        <title>Empirical analysis of transcriptional activity in the Arabidopsis genome.</title>
        <authorList>
            <person name="Yamada K."/>
            <person name="Lim J."/>
            <person name="Dale J.M."/>
            <person name="Chen H."/>
            <person name="Shinn P."/>
            <person name="Palm C.J."/>
            <person name="Southwick A.M."/>
            <person name="Wu H.C."/>
            <person name="Kim C.J."/>
            <person name="Nguyen M."/>
            <person name="Pham P.K."/>
            <person name="Cheuk R.F."/>
            <person name="Karlin-Newmann G."/>
            <person name="Liu S.X."/>
            <person name="Lam B."/>
            <person name="Sakano H."/>
            <person name="Wu T."/>
            <person name="Yu G."/>
            <person name="Miranda M."/>
            <person name="Quach H.L."/>
            <person name="Tripp M."/>
            <person name="Chang C.H."/>
            <person name="Lee J.M."/>
            <person name="Toriumi M.J."/>
            <person name="Chan M.M."/>
            <person name="Tang C.C."/>
            <person name="Onodera C.S."/>
            <person name="Deng J.M."/>
            <person name="Akiyama K."/>
            <person name="Ansari Y."/>
            <person name="Arakawa T."/>
            <person name="Banh J."/>
            <person name="Banno F."/>
            <person name="Bowser L."/>
            <person name="Brooks S.Y."/>
            <person name="Carninci P."/>
            <person name="Chao Q."/>
            <person name="Choy N."/>
            <person name="Enju A."/>
            <person name="Goldsmith A.D."/>
            <person name="Gurjal M."/>
            <person name="Hansen N.F."/>
            <person name="Hayashizaki Y."/>
            <person name="Johnson-Hopson C."/>
            <person name="Hsuan V.W."/>
            <person name="Iida K."/>
            <person name="Karnes M."/>
            <person name="Khan S."/>
            <person name="Koesema E."/>
            <person name="Ishida J."/>
            <person name="Jiang P.X."/>
            <person name="Jones T."/>
            <person name="Kawai J."/>
            <person name="Kamiya A."/>
            <person name="Meyers C."/>
            <person name="Nakajima M."/>
            <person name="Narusaka M."/>
            <person name="Seki M."/>
            <person name="Sakurai T."/>
            <person name="Satou M."/>
            <person name="Tamse R."/>
            <person name="Vaysberg M."/>
            <person name="Wallender E.K."/>
            <person name="Wong C."/>
            <person name="Yamamura Y."/>
            <person name="Yuan S."/>
            <person name="Shinozaki K."/>
            <person name="Davis R.W."/>
            <person name="Theologis A."/>
            <person name="Ecker J.R."/>
        </authorList>
    </citation>
    <scope>NUCLEOTIDE SEQUENCE [LARGE SCALE MRNA] (RPL23A; RPL23B AND RPL23C)</scope>
    <source>
        <strain>cv. Columbia</strain>
    </source>
</reference>
<reference key="6">
    <citation type="submission" date="2002-03" db="EMBL/GenBank/DDBJ databases">
        <title>Full-length cDNA from Arabidopsis thaliana.</title>
        <authorList>
            <person name="Brover V.V."/>
            <person name="Troukhan M.E."/>
            <person name="Alexandrov N.A."/>
            <person name="Lu Y.-P."/>
            <person name="Flavell R.B."/>
            <person name="Feldmann K.A."/>
        </authorList>
    </citation>
    <scope>NUCLEOTIDE SEQUENCE [LARGE SCALE MRNA] (RPL23A; RPL23B AND RPL23C)</scope>
</reference>
<reference key="7">
    <citation type="journal article" date="1993" name="Plant J.">
        <title>An inventory of 1152 expressed sequence tags obtained by partial sequencing of cDNAs from Arabidopsis thaliana.</title>
        <authorList>
            <person name="Hoefte H."/>
            <person name="Desprez T."/>
            <person name="Amselem J."/>
            <person name="Chiapello H."/>
            <person name="Rouze P."/>
            <person name="Caboche M."/>
            <person name="Moisan A."/>
            <person name="Jourjon M.-F."/>
            <person name="Charpenteau J.-L."/>
            <person name="Berthomieu P."/>
            <person name="Guerrier D."/>
            <person name="Giraudat J."/>
            <person name="Quigley F."/>
            <person name="Thomas F."/>
            <person name="Yu D.-Y."/>
            <person name="Mache R."/>
            <person name="Raynal M."/>
            <person name="Cooke R."/>
            <person name="Grellet F."/>
            <person name="Delseny M."/>
            <person name="Parmentier Y."/>
            <person name="de Marcillac G."/>
            <person name="Gigot C."/>
            <person name="Fleck J."/>
            <person name="Philipps G."/>
            <person name="Axelos M."/>
            <person name="Bardet C."/>
            <person name="Tremousaygue D."/>
            <person name="Lescure B."/>
        </authorList>
    </citation>
    <scope>NUCLEOTIDE SEQUENCE [LARGE SCALE MRNA] OF 1-87 (RPL23C)</scope>
    <source>
        <strain>cv. C24</strain>
        <strain>cv. Columbia</strain>
        <tissue>Flower</tissue>
    </source>
</reference>
<reference key="8">
    <citation type="journal article" date="2001" name="Plant Physiol.">
        <title>The organization of cytoplasmic ribosomal protein genes in the Arabidopsis genome.</title>
        <authorList>
            <person name="Barakat A."/>
            <person name="Szick-Miranda K."/>
            <person name="Chang I.-F."/>
            <person name="Guyot R."/>
            <person name="Blanc G."/>
            <person name="Cooke R."/>
            <person name="Delseny M."/>
            <person name="Bailey-Serres J."/>
        </authorList>
    </citation>
    <scope>GENE FAMILY ORGANIZATION</scope>
    <scope>NOMENCLATURE</scope>
</reference>
<reference key="9">
    <citation type="journal article" date="2023" name="Plant Cell">
        <title>An updated nomenclature for plant ribosomal protein genes.</title>
        <authorList>
            <person name="Scarpin M.R."/>
            <person name="Busche M."/>
            <person name="Martinez R.E."/>
            <person name="Harper L.C."/>
            <person name="Reiser L."/>
            <person name="Szakonyi D."/>
            <person name="Merchante C."/>
            <person name="Lan T."/>
            <person name="Xiong W."/>
            <person name="Mo B."/>
            <person name="Tang G."/>
            <person name="Chen X."/>
            <person name="Bailey-Serres J."/>
            <person name="Browning K.S."/>
            <person name="Brunkard J.O."/>
        </authorList>
    </citation>
    <scope>NOMENCLATURE</scope>
</reference>
<feature type="chain" id="PRO_0000128625" description="Large ribosomal subunit protein uL14x/uL14z/uL14y">
    <location>
        <begin position="1"/>
        <end position="140"/>
    </location>
</feature>
<feature type="sequence conflict" description="In Ref. 7; CAA79169." evidence="2" ref="7">
    <original>L</original>
    <variation>F</variation>
    <location>
        <position position="52"/>
    </location>
</feature>
<feature type="sequence conflict" description="In Ref. 7; CAA79169." evidence="2" ref="7">
    <original>A</original>
    <variation>P</variation>
    <location>
        <position position="55"/>
    </location>
</feature>
<feature type="sequence conflict" description="In Ref. 7; CAA79169." evidence="2" ref="7">
    <original>K</original>
    <variation>N</variation>
    <location>
        <position position="66"/>
    </location>
</feature>
<feature type="sequence conflict" description="In Ref. 7; CAA79169." evidence="2" ref="7">
    <original>R</original>
    <variation>S</variation>
    <location>
        <position position="83"/>
    </location>
</feature>
<feature type="sequence conflict" description="In Ref. 6; AAM67199." evidence="2" ref="6">
    <original>E</original>
    <variation>D</variation>
    <location>
        <position position="111"/>
    </location>
</feature>
<protein>
    <recommendedName>
        <fullName evidence="1">Large ribosomal subunit protein uL14x/uL14z/uL14y</fullName>
    </recommendedName>
    <alternativeName>
        <fullName>60S ribosomal protein L23</fullName>
    </alternativeName>
    <alternativeName>
        <fullName>Protein EMBRYO DEFECTIVE 2171</fullName>
    </alternativeName>
</protein>
<name>RL23_ARATH</name>
<gene>
    <name type="primary">RPL23A</name>
    <name type="ordered locus">At1g04480</name>
    <name type="ORF">F19P19.5</name>
</gene>
<gene>
    <name type="primary">RPL23B</name>
    <name type="ordered locus">At2g33370</name>
    <name type="ORF">F4P9.14</name>
</gene>
<gene>
    <name type="primary">RPL23C</name>
    <name type="synonym">EMB2171</name>
    <name type="ordered locus">At3g04400</name>
    <name type="ORF">T27C4.4</name>
</gene>
<accession>P49690</accession>
<accession>Q8L8P0</accession>
<accession>Q9SDB5</accession>
<organism>
    <name type="scientific">Arabidopsis thaliana</name>
    <name type="common">Mouse-ear cress</name>
    <dbReference type="NCBI Taxonomy" id="3702"/>
    <lineage>
        <taxon>Eukaryota</taxon>
        <taxon>Viridiplantae</taxon>
        <taxon>Streptophyta</taxon>
        <taxon>Embryophyta</taxon>
        <taxon>Tracheophyta</taxon>
        <taxon>Spermatophyta</taxon>
        <taxon>Magnoliopsida</taxon>
        <taxon>eudicotyledons</taxon>
        <taxon>Gunneridae</taxon>
        <taxon>Pentapetalae</taxon>
        <taxon>rosids</taxon>
        <taxon>malvids</taxon>
        <taxon>Brassicales</taxon>
        <taxon>Brassicaceae</taxon>
        <taxon>Camelineae</taxon>
        <taxon>Arabidopsis</taxon>
    </lineage>
</organism>